<reference key="1">
    <citation type="journal article" date="2005" name="Nat. Biotechnol.">
        <title>Complete genome sequence of the plant commensal Pseudomonas fluorescens Pf-5.</title>
        <authorList>
            <person name="Paulsen I.T."/>
            <person name="Press C.M."/>
            <person name="Ravel J."/>
            <person name="Kobayashi D.Y."/>
            <person name="Myers G.S.A."/>
            <person name="Mavrodi D.V."/>
            <person name="DeBoy R.T."/>
            <person name="Seshadri R."/>
            <person name="Ren Q."/>
            <person name="Madupu R."/>
            <person name="Dodson R.J."/>
            <person name="Durkin A.S."/>
            <person name="Brinkac L.M."/>
            <person name="Daugherty S.C."/>
            <person name="Sullivan S.A."/>
            <person name="Rosovitz M.J."/>
            <person name="Gwinn M.L."/>
            <person name="Zhou L."/>
            <person name="Schneider D.J."/>
            <person name="Cartinhour S.W."/>
            <person name="Nelson W.C."/>
            <person name="Weidman J."/>
            <person name="Watkins K."/>
            <person name="Tran K."/>
            <person name="Khouri H."/>
            <person name="Pierson E.A."/>
            <person name="Pierson L.S. III"/>
            <person name="Thomashow L.S."/>
            <person name="Loper J.E."/>
        </authorList>
    </citation>
    <scope>NUCLEOTIDE SEQUENCE [LARGE SCALE GENOMIC DNA]</scope>
    <source>
        <strain>ATCC BAA-477 / NRRL B-23932 / Pf-5</strain>
    </source>
</reference>
<proteinExistence type="inferred from homology"/>
<gene>
    <name evidence="1" type="primary">eutC</name>
    <name type="ordered locus">PFL_5474</name>
</gene>
<sequence length="274" mass="29971">MQKHPTDSQNPWLELRRLTPARIALGRTGTSLPTDAQLDFQYAHAQARDAVHLPFDHAGLSAQLAERGRDSLLLHSAATDRHSYLQRPDLGRRLSDDSAQALRDYASAHPGGFDLAVVVADGLSALAVHRHTLPFLARMEEQTAAEGWSLSPVVLVEQGRVAVADEVGQLLGAKMTVILIGERPGLSSPDSLGLYFTYQPKIGLTDAYRNCISNVRLEGLSYGMAAHRLLYLMREACRRQLSGVNLKDEAQVQTLDSDEQADMKGNFLLGPPQA</sequence>
<keyword id="KW-1283">Bacterial microcompartment</keyword>
<keyword id="KW-0846">Cobalamin</keyword>
<keyword id="KW-0170">Cobalt</keyword>
<keyword id="KW-0456">Lyase</keyword>
<dbReference type="EC" id="4.3.1.7" evidence="1"/>
<dbReference type="EMBL" id="CP000076">
    <property type="protein sequence ID" value="AAY94684.1"/>
    <property type="molecule type" value="Genomic_DNA"/>
</dbReference>
<dbReference type="RefSeq" id="WP_011063692.1">
    <property type="nucleotide sequence ID" value="NC_004129.6"/>
</dbReference>
<dbReference type="SMR" id="Q4K5E1"/>
<dbReference type="STRING" id="220664.PFL_5474"/>
<dbReference type="KEGG" id="pfl:PFL_5474"/>
<dbReference type="PATRIC" id="fig|220664.5.peg.5591"/>
<dbReference type="eggNOG" id="COG4302">
    <property type="taxonomic scope" value="Bacteria"/>
</dbReference>
<dbReference type="HOGENOM" id="CLU_068224_1_0_6"/>
<dbReference type="UniPathway" id="UPA00560"/>
<dbReference type="Proteomes" id="UP000008540">
    <property type="component" value="Chromosome"/>
</dbReference>
<dbReference type="GO" id="GO:0009350">
    <property type="term" value="C:ethanolamine ammonia-lyase complex"/>
    <property type="evidence" value="ECO:0007669"/>
    <property type="project" value="UniProtKB-UniRule"/>
</dbReference>
<dbReference type="GO" id="GO:0031471">
    <property type="term" value="C:ethanolamine degradation polyhedral organelle"/>
    <property type="evidence" value="ECO:0007669"/>
    <property type="project" value="UniProtKB-UniRule"/>
</dbReference>
<dbReference type="GO" id="GO:0031419">
    <property type="term" value="F:cobalamin binding"/>
    <property type="evidence" value="ECO:0007669"/>
    <property type="project" value="UniProtKB-UniRule"/>
</dbReference>
<dbReference type="GO" id="GO:0008851">
    <property type="term" value="F:ethanolamine ammonia-lyase activity"/>
    <property type="evidence" value="ECO:0007669"/>
    <property type="project" value="UniProtKB-UniRule"/>
</dbReference>
<dbReference type="GO" id="GO:0006520">
    <property type="term" value="P:amino acid metabolic process"/>
    <property type="evidence" value="ECO:0007669"/>
    <property type="project" value="InterPro"/>
</dbReference>
<dbReference type="GO" id="GO:0046336">
    <property type="term" value="P:ethanolamine catabolic process"/>
    <property type="evidence" value="ECO:0007669"/>
    <property type="project" value="UniProtKB-UniRule"/>
</dbReference>
<dbReference type="FunFam" id="1.10.30.40:FF:000001">
    <property type="entry name" value="Ethanolamine ammonia-lyase light chain"/>
    <property type="match status" value="1"/>
</dbReference>
<dbReference type="FunFam" id="3.40.50.11240:FF:000001">
    <property type="entry name" value="Ethanolamine ammonia-lyase light chain"/>
    <property type="match status" value="1"/>
</dbReference>
<dbReference type="Gene3D" id="3.40.50.11240">
    <property type="entry name" value="Ethanolamine ammonia-lyase light chain (EutC)"/>
    <property type="match status" value="1"/>
</dbReference>
<dbReference type="Gene3D" id="1.10.30.40">
    <property type="entry name" value="Ethanolamine ammonia-lyase light chain (EutC), N-terminal domain"/>
    <property type="match status" value="1"/>
</dbReference>
<dbReference type="HAMAP" id="MF_00601">
    <property type="entry name" value="EutC"/>
    <property type="match status" value="1"/>
</dbReference>
<dbReference type="InterPro" id="IPR009246">
    <property type="entry name" value="EutC"/>
</dbReference>
<dbReference type="InterPro" id="IPR042251">
    <property type="entry name" value="EutC_C"/>
</dbReference>
<dbReference type="InterPro" id="IPR042255">
    <property type="entry name" value="EutC_N"/>
</dbReference>
<dbReference type="NCBIfam" id="NF003971">
    <property type="entry name" value="PRK05465.1"/>
    <property type="match status" value="1"/>
</dbReference>
<dbReference type="PANTHER" id="PTHR39330">
    <property type="entry name" value="ETHANOLAMINE AMMONIA-LYASE LIGHT CHAIN"/>
    <property type="match status" value="1"/>
</dbReference>
<dbReference type="PANTHER" id="PTHR39330:SF1">
    <property type="entry name" value="ETHANOLAMINE AMMONIA-LYASE SMALL SUBUNIT"/>
    <property type="match status" value="1"/>
</dbReference>
<dbReference type="Pfam" id="PF05985">
    <property type="entry name" value="EutC"/>
    <property type="match status" value="1"/>
</dbReference>
<dbReference type="PIRSF" id="PIRSF018982">
    <property type="entry name" value="EutC"/>
    <property type="match status" value="1"/>
</dbReference>
<protein>
    <recommendedName>
        <fullName evidence="1">Ethanolamine ammonia-lyase small subunit</fullName>
        <shortName evidence="1">EAL small subunit</shortName>
        <ecNumber evidence="1">4.3.1.7</ecNumber>
    </recommendedName>
</protein>
<accession>Q4K5E1</accession>
<evidence type="ECO:0000255" key="1">
    <source>
        <dbReference type="HAMAP-Rule" id="MF_00601"/>
    </source>
</evidence>
<feature type="chain" id="PRO_1000025860" description="Ethanolamine ammonia-lyase small subunit">
    <location>
        <begin position="1"/>
        <end position="274"/>
    </location>
</feature>
<feature type="binding site" evidence="1">
    <location>
        <position position="161"/>
    </location>
    <ligand>
        <name>adenosylcob(III)alamin</name>
        <dbReference type="ChEBI" id="CHEBI:18408"/>
    </ligand>
</feature>
<feature type="binding site" evidence="1">
    <location>
        <position position="182"/>
    </location>
    <ligand>
        <name>adenosylcob(III)alamin</name>
        <dbReference type="ChEBI" id="CHEBI:18408"/>
    </ligand>
</feature>
<feature type="binding site" evidence="1">
    <location>
        <position position="211"/>
    </location>
    <ligand>
        <name>adenosylcob(III)alamin</name>
        <dbReference type="ChEBI" id="CHEBI:18408"/>
    </ligand>
</feature>
<organism>
    <name type="scientific">Pseudomonas fluorescens (strain ATCC BAA-477 / NRRL B-23932 / Pf-5)</name>
    <dbReference type="NCBI Taxonomy" id="220664"/>
    <lineage>
        <taxon>Bacteria</taxon>
        <taxon>Pseudomonadati</taxon>
        <taxon>Pseudomonadota</taxon>
        <taxon>Gammaproteobacteria</taxon>
        <taxon>Pseudomonadales</taxon>
        <taxon>Pseudomonadaceae</taxon>
        <taxon>Pseudomonas</taxon>
    </lineage>
</organism>
<comment type="function">
    <text evidence="1">Catalyzes the deamination of various vicinal amino-alcohols to oxo compounds. Allows this organism to utilize ethanolamine as the sole source of nitrogen and carbon in the presence of external vitamin B12.</text>
</comment>
<comment type="catalytic activity">
    <reaction evidence="1">
        <text>ethanolamine = acetaldehyde + NH4(+)</text>
        <dbReference type="Rhea" id="RHEA:15313"/>
        <dbReference type="ChEBI" id="CHEBI:15343"/>
        <dbReference type="ChEBI" id="CHEBI:28938"/>
        <dbReference type="ChEBI" id="CHEBI:57603"/>
        <dbReference type="EC" id="4.3.1.7"/>
    </reaction>
</comment>
<comment type="cofactor">
    <cofactor evidence="1">
        <name>adenosylcob(III)alamin</name>
        <dbReference type="ChEBI" id="CHEBI:18408"/>
    </cofactor>
    <text evidence="1">Binds between the large and small subunits.</text>
</comment>
<comment type="pathway">
    <text evidence="1">Amine and polyamine degradation; ethanolamine degradation.</text>
</comment>
<comment type="subunit">
    <text evidence="1">The basic unit is a heterodimer which dimerizes to form tetramers. The heterotetramers trimerize; 6 large subunits form a core ring with 6 small subunits projecting outwards.</text>
</comment>
<comment type="subcellular location">
    <subcellularLocation>
        <location evidence="1">Bacterial microcompartment</location>
    </subcellularLocation>
</comment>
<comment type="similarity">
    <text evidence="1">Belongs to the EutC family.</text>
</comment>
<name>EUTC_PSEF5</name>